<sequence>MNEESTRYVDVNYSDLDKELTYTTSEVAEILNENESTIRYWCDCFSDYIHIEREGRNRKFTKSNIDDLAFTKELLKKERLTIKQAQKRWEHIKTQPSQNTKVISTTETTSQENVLNEQALLKLEEIKKQFLNDISTQINNTISQQLSTALNAHNEALEQTKVELKDYISATIEDKLEANISNLKAHIDATTENTNKQIHQIYDKDVELVNDLKKHMEERKQQNEEQNNKKGFFGKLFKR</sequence>
<organismHost>
    <name type="scientific">Clostridium botulinum C</name>
    <dbReference type="NCBI Taxonomy" id="36828"/>
</organismHost>
<feature type="chain" id="PRO_0000448569" description="Regulator protein TubY">
    <location>
        <begin position="1"/>
        <end position="239"/>
    </location>
</feature>
<feature type="region of interest" description="Required to bind TubZ" evidence="4">
    <location>
        <begin position="138"/>
        <end position="239"/>
    </location>
</feature>
<feature type="region of interest" description="Disordered" evidence="2">
    <location>
        <begin position="217"/>
        <end position="239"/>
    </location>
</feature>
<feature type="coiled-coil region" evidence="1">
    <location>
        <begin position="150"/>
        <end position="229"/>
    </location>
</feature>
<feature type="compositionally biased region" description="Basic and acidic residues" evidence="2">
    <location>
        <begin position="217"/>
        <end position="228"/>
    </location>
</feature>
<feature type="compositionally biased region" description="Low complexity" evidence="2">
    <location>
        <begin position="229"/>
        <end position="239"/>
    </location>
</feature>
<feature type="mutagenesis site" description="Allows purification of soluble protein. Bind TubZ." evidence="4">
    <location>
        <begin position="227"/>
        <end position="239"/>
    </location>
</feature>
<comment type="function">
    <text evidence="4 5">A probable TubZ filament regulator that is part of the type III partition system presumably used to ensure correct segregation of this bacteriophage. Binds to TubZ in the presence of GTP and Mg(2+), and to TubZ-TubR-tubC (tubC is the centromere-like site). The latter complex is reshaped from large bundles to rings by TubY (PubMed:22538818). Modifies TubZ filaments formed in the presence of GDP to make them thinner and more flexible; in GDP and lacking the last 8 residues of TubZ makes rings without TubT-tubC (PubMed:28230082).</text>
</comment>
<comment type="subunit">
    <text evidence="4 5">Forms homooctamers in the absence of the last 13 residues; the coiled coil domain is required for oligomerization. In the presence of GTP and Mg(2+) binds to TubZ and also to TubZ-TubR-tubC DNA; the latter is reshaped from large filament bundles to rings of 30-40 nm diameter.</text>
</comment>
<comment type="subcellular location">
    <subcellularLocation>
        <location evidence="7">Host cytoplasm</location>
    </subcellularLocation>
</comment>
<comment type="domain">
    <text evidence="4">The coiled coil domain is required for oligomerization and for binding to TubZ, but the C-terminal 13 residues are not.</text>
</comment>
<comment type="miscellaneous">
    <text evidence="3">This bacteriophage also exists as a circular plasmid prophage in its host.</text>
</comment>
<name>TUBY_CBCP</name>
<evidence type="ECO:0000255" key="1"/>
<evidence type="ECO:0000256" key="2">
    <source>
        <dbReference type="SAM" id="MobiDB-lite"/>
    </source>
</evidence>
<evidence type="ECO:0000269" key="3">
    <source>
    </source>
</evidence>
<evidence type="ECO:0000269" key="4">
    <source>
    </source>
</evidence>
<evidence type="ECO:0000269" key="5">
    <source>
    </source>
</evidence>
<evidence type="ECO:0000303" key="6">
    <source>
    </source>
</evidence>
<evidence type="ECO:0000305" key="7"/>
<evidence type="ECO:0000305" key="8">
    <source>
    </source>
</evidence>
<organism>
    <name type="scientific">Clostridium botulinum C phage</name>
    <name type="common">Clostridium botulinum C bacteriophage</name>
    <dbReference type="NCBI Taxonomy" id="12336"/>
    <lineage>
        <taxon>Viruses</taxon>
        <taxon>Duplodnaviria</taxon>
        <taxon>Heunggongvirae</taxon>
        <taxon>Uroviricota</taxon>
        <taxon>Caudoviricetes</taxon>
    </lineage>
</organism>
<keyword id="KW-0175">Coiled coil</keyword>
<keyword id="KW-1035">Host cytoplasm</keyword>
<keyword id="KW-0616">Plasmid partition</keyword>
<keyword id="KW-1185">Reference proteome</keyword>
<accession>Q331T8</accession>
<gene>
    <name evidence="6" type="primary">tubY</name>
    <name type="ORF">CST188</name>
</gene>
<dbReference type="EMBL" id="AP008983">
    <property type="protein sequence ID" value="BAE47886.1"/>
    <property type="molecule type" value="Genomic_DNA"/>
</dbReference>
<dbReference type="RefSeq" id="YP_398618.1">
    <property type="nucleotide sequence ID" value="NC_007581.1"/>
</dbReference>
<dbReference type="SMR" id="Q331T8"/>
<dbReference type="GeneID" id="3772974"/>
<dbReference type="KEGG" id="vg:3772974"/>
<dbReference type="Proteomes" id="UP000001240">
    <property type="component" value="Segment"/>
</dbReference>
<dbReference type="GO" id="GO:0030430">
    <property type="term" value="C:host cell cytoplasm"/>
    <property type="evidence" value="ECO:0007669"/>
    <property type="project" value="UniProtKB-SubCell"/>
</dbReference>
<dbReference type="GO" id="GO:0003677">
    <property type="term" value="F:DNA binding"/>
    <property type="evidence" value="ECO:0007669"/>
    <property type="project" value="InterPro"/>
</dbReference>
<dbReference type="GO" id="GO:0030541">
    <property type="term" value="P:plasmid partitioning"/>
    <property type="evidence" value="ECO:0007669"/>
    <property type="project" value="UniProtKB-KW"/>
</dbReference>
<dbReference type="GO" id="GO:0006355">
    <property type="term" value="P:regulation of DNA-templated transcription"/>
    <property type="evidence" value="ECO:0007669"/>
    <property type="project" value="InterPro"/>
</dbReference>
<dbReference type="Gene3D" id="1.10.1660.10">
    <property type="match status" value="1"/>
</dbReference>
<dbReference type="InterPro" id="IPR009061">
    <property type="entry name" value="DNA-bd_dom_put_sf"/>
</dbReference>
<dbReference type="InterPro" id="IPR000551">
    <property type="entry name" value="MerR-type_HTH_dom"/>
</dbReference>
<dbReference type="Pfam" id="PF13411">
    <property type="entry name" value="MerR_1"/>
    <property type="match status" value="1"/>
</dbReference>
<dbReference type="SUPFAM" id="SSF46955">
    <property type="entry name" value="Putative DNA-binding domain"/>
    <property type="match status" value="1"/>
</dbReference>
<protein>
    <recommendedName>
        <fullName evidence="8">Regulator protein TubY</fullName>
    </recommendedName>
</protein>
<reference key="1">
    <citation type="journal article" date="2005" name="Proc. Natl. Acad. Sci. U.S.A.">
        <title>The genome sequence of Clostridium botulinum type C neurotoxin-converting phage and the molecular mechanisms of unstable lysogeny.</title>
        <authorList>
            <person name="Sakaguchi Y."/>
            <person name="Hayashi T."/>
            <person name="Kurokawa K."/>
            <person name="Nakayama K."/>
            <person name="Oshima K."/>
            <person name="Fujinaga Y."/>
            <person name="Ohnishi M."/>
            <person name="Ohtsubo E."/>
            <person name="Hattori M."/>
            <person name="Oguma K."/>
        </authorList>
    </citation>
    <scope>NUCLEOTIDE SEQUENCE [LARGE SCALE GENOMIC DNA]</scope>
    <source>
        <strain>Clostridium phage c-st</strain>
    </source>
</reference>
<reference key="2">
    <citation type="journal article" date="2012" name="Proc. Natl. Acad. Sci. U.S.A.">
        <title>Tubulin homolog TubZ in a phage-encoded partition system.</title>
        <authorList>
            <person name="Oliva M.A."/>
            <person name="Martin-Galiano A.J."/>
            <person name="Sakaguchi Y."/>
            <person name="Andreu J.M."/>
        </authorList>
    </citation>
    <scope>FUNCTION</scope>
    <scope>SUBUNIT</scope>
    <scope>DOMAIN</scope>
    <scope>MUTAGENESIS OF 227-ASN--ARG-239</scope>
    <source>
        <strain>Clostridium phage c-st</strain>
    </source>
</reference>
<reference key="3">
    <citation type="journal article" date="2017" name="Sci. Rep.">
        <title>TubZ filament assembly dynamics requires the flexible C-terminal tail.</title>
        <authorList>
            <person name="Fuentes-Perez M.E."/>
            <person name="Nunez-Ramirez R."/>
            <person name="Martin-Gonzalez A."/>
            <person name="Juan-Rodriguez D."/>
            <person name="Llorca O."/>
            <person name="Moreno-Herrero F."/>
            <person name="Oliva M.A."/>
        </authorList>
    </citation>
    <scope>FUNCTION</scope>
    <scope>SUBUNIT</scope>
    <source>
        <strain>Clostridium phage c-st</strain>
    </source>
</reference>
<proteinExistence type="evidence at protein level"/>